<evidence type="ECO:0000255" key="1">
    <source>
        <dbReference type="PROSITE-ProRule" id="PRU00457"/>
    </source>
</evidence>
<protein>
    <recommendedName>
        <fullName>Transposase for insertion sequence element IS3411</fullName>
    </recommendedName>
</protein>
<accession>P11257</accession>
<feature type="chain" id="PRO_0000075443" description="Transposase for insertion sequence element IS3411">
    <location>
        <begin position="1"/>
        <end position="240"/>
    </location>
</feature>
<feature type="domain" description="Integrase catalytic" evidence="1">
    <location>
        <begin position="125"/>
        <end position="240"/>
    </location>
</feature>
<proteinExistence type="predicted"/>
<organism>
    <name type="scientific">Escherichia coli</name>
    <dbReference type="NCBI Taxonomy" id="562"/>
    <lineage>
        <taxon>Bacteria</taxon>
        <taxon>Pseudomonadati</taxon>
        <taxon>Pseudomonadota</taxon>
        <taxon>Gammaproteobacteria</taxon>
        <taxon>Enterobacterales</taxon>
        <taxon>Enterobacteriaceae</taxon>
        <taxon>Escherichia</taxon>
    </lineage>
</organism>
<sequence>MMPLLDKLREQYGVGPLCSELHIAPSTYYHCQQQRHHPDKRSARAQRDDWLKKQIQRVYDENHKVYGVRKVWRQLLREGIRVARCTVARLMAVMGLAGVLRGKKVRTTISRKAVAAGHRVNRQFVAERPDQLWVADFTYVSTWRGFVYVAFIIDVFAGYIVGWRVSSSMETTFVLDALEQALWTRRPPARSITVIKVLSMYRWPTHSGLRKPDYWHQQEVQATRMTTRWRRASMVFTKRR</sequence>
<dbReference type="EMBL" id="M19532">
    <property type="protein sequence ID" value="AAA88669.1"/>
    <property type="molecule type" value="Genomic_DNA"/>
</dbReference>
<dbReference type="PIR" id="A27744">
    <property type="entry name" value="TQEC34"/>
</dbReference>
<dbReference type="GO" id="GO:0003677">
    <property type="term" value="F:DNA binding"/>
    <property type="evidence" value="ECO:0007669"/>
    <property type="project" value="UniProtKB-KW"/>
</dbReference>
<dbReference type="GO" id="GO:0015074">
    <property type="term" value="P:DNA integration"/>
    <property type="evidence" value="ECO:0007669"/>
    <property type="project" value="InterPro"/>
</dbReference>
<dbReference type="GO" id="GO:0006310">
    <property type="term" value="P:DNA recombination"/>
    <property type="evidence" value="ECO:0007669"/>
    <property type="project" value="UniProtKB-KW"/>
</dbReference>
<dbReference type="GO" id="GO:0032196">
    <property type="term" value="P:transposition"/>
    <property type="evidence" value="ECO:0007669"/>
    <property type="project" value="UniProtKB-KW"/>
</dbReference>
<dbReference type="Gene3D" id="3.30.420.10">
    <property type="entry name" value="Ribonuclease H-like superfamily/Ribonuclease H"/>
    <property type="match status" value="1"/>
</dbReference>
<dbReference type="InterPro" id="IPR025948">
    <property type="entry name" value="HTH-like_dom"/>
</dbReference>
<dbReference type="InterPro" id="IPR001584">
    <property type="entry name" value="Integrase_cat-core"/>
</dbReference>
<dbReference type="InterPro" id="IPR012337">
    <property type="entry name" value="RNaseH-like_sf"/>
</dbReference>
<dbReference type="InterPro" id="IPR036397">
    <property type="entry name" value="RNaseH_sf"/>
</dbReference>
<dbReference type="InterPro" id="IPR048020">
    <property type="entry name" value="Transpos_IS3"/>
</dbReference>
<dbReference type="InterPro" id="IPR050900">
    <property type="entry name" value="Transposase_IS3/IS150/IS904"/>
</dbReference>
<dbReference type="NCBIfam" id="NF033516">
    <property type="entry name" value="transpos_IS3"/>
    <property type="match status" value="1"/>
</dbReference>
<dbReference type="PANTHER" id="PTHR46889">
    <property type="entry name" value="TRANSPOSASE INSF FOR INSERTION SEQUENCE IS3B-RELATED"/>
    <property type="match status" value="1"/>
</dbReference>
<dbReference type="PANTHER" id="PTHR46889:SF4">
    <property type="entry name" value="TRANSPOSASE INSO FOR INSERTION SEQUENCE ELEMENT IS911B-RELATED"/>
    <property type="match status" value="1"/>
</dbReference>
<dbReference type="Pfam" id="PF13276">
    <property type="entry name" value="HTH_21"/>
    <property type="match status" value="1"/>
</dbReference>
<dbReference type="Pfam" id="PF00665">
    <property type="entry name" value="rve"/>
    <property type="match status" value="1"/>
</dbReference>
<dbReference type="SUPFAM" id="SSF53098">
    <property type="entry name" value="Ribonuclease H-like"/>
    <property type="match status" value="1"/>
</dbReference>
<dbReference type="PROSITE" id="PS50994">
    <property type="entry name" value="INTEGRASE"/>
    <property type="match status" value="1"/>
</dbReference>
<name>T341_ECOLX</name>
<comment type="function">
    <text>Involved in the transposition of the insertion sequence.</text>
</comment>
<keyword id="KW-0233">DNA recombination</keyword>
<keyword id="KW-0238">DNA-binding</keyword>
<keyword id="KW-0814">Transposable element</keyword>
<keyword id="KW-0815">Transposition</keyword>
<reference key="1">
    <citation type="journal article" date="1988" name="J. Bacteriol.">
        <title>Nucleotide sequence of insertion sequence IS3411, which flanks the citrate utilization determinant of transposon Tn3411.</title>
        <authorList>
            <person name="Ishiguro N."/>
            <person name="Sato G."/>
        </authorList>
    </citation>
    <scope>NUCLEOTIDE SEQUENCE [GENOMIC DNA]</scope>
</reference>